<protein>
    <recommendedName>
        <fullName>Protein Shroom3</fullName>
    </recommendedName>
    <alternativeName>
        <fullName>Shroom-related protein</fullName>
        <shortName>hShrmL</shortName>
    </alternativeName>
</protein>
<feature type="chain" id="PRO_0000286066" description="Protein Shroom3">
    <location>
        <begin position="1"/>
        <end position="1996"/>
    </location>
</feature>
<feature type="domain" description="PDZ" evidence="4">
    <location>
        <begin position="25"/>
        <end position="110"/>
    </location>
</feature>
<feature type="domain" description="ASD1" evidence="5">
    <location>
        <begin position="928"/>
        <end position="1030"/>
    </location>
</feature>
<feature type="domain" description="ASD2" evidence="6">
    <location>
        <begin position="1669"/>
        <end position="1957"/>
    </location>
</feature>
<feature type="region of interest" description="Disordered" evidence="7">
    <location>
        <begin position="150"/>
        <end position="173"/>
    </location>
</feature>
<feature type="region of interest" description="Disordered" evidence="7">
    <location>
        <begin position="340"/>
        <end position="389"/>
    </location>
</feature>
<feature type="region of interest" description="Disordered" evidence="7">
    <location>
        <begin position="437"/>
        <end position="468"/>
    </location>
</feature>
<feature type="region of interest" description="Disordered" evidence="7">
    <location>
        <begin position="568"/>
        <end position="629"/>
    </location>
</feature>
<feature type="region of interest" description="Disordered" evidence="7">
    <location>
        <begin position="673"/>
        <end position="772"/>
    </location>
</feature>
<feature type="region of interest" description="Disordered" evidence="7">
    <location>
        <begin position="788"/>
        <end position="1053"/>
    </location>
</feature>
<feature type="region of interest" description="Disordered" evidence="7">
    <location>
        <begin position="1093"/>
        <end position="1115"/>
    </location>
</feature>
<feature type="region of interest" description="Disordered" evidence="7">
    <location>
        <begin position="1137"/>
        <end position="1223"/>
    </location>
</feature>
<feature type="region of interest" description="Disordered" evidence="7">
    <location>
        <begin position="1315"/>
        <end position="1573"/>
    </location>
</feature>
<feature type="region of interest" description="Disordered" evidence="7">
    <location>
        <begin position="1627"/>
        <end position="1665"/>
    </location>
</feature>
<feature type="compositionally biased region" description="Basic and acidic residues" evidence="7">
    <location>
        <begin position="700"/>
        <end position="718"/>
    </location>
</feature>
<feature type="compositionally biased region" description="Low complexity" evidence="7">
    <location>
        <begin position="750"/>
        <end position="768"/>
    </location>
</feature>
<feature type="compositionally biased region" description="Polar residues" evidence="7">
    <location>
        <begin position="814"/>
        <end position="823"/>
    </location>
</feature>
<feature type="compositionally biased region" description="Basic and acidic residues" evidence="7">
    <location>
        <begin position="826"/>
        <end position="836"/>
    </location>
</feature>
<feature type="compositionally biased region" description="Basic and acidic residues" evidence="7">
    <location>
        <begin position="846"/>
        <end position="859"/>
    </location>
</feature>
<feature type="compositionally biased region" description="Polar residues" evidence="7">
    <location>
        <begin position="862"/>
        <end position="871"/>
    </location>
</feature>
<feature type="compositionally biased region" description="Polar residues" evidence="7">
    <location>
        <begin position="887"/>
        <end position="896"/>
    </location>
</feature>
<feature type="compositionally biased region" description="Basic and acidic residues" evidence="7">
    <location>
        <begin position="897"/>
        <end position="909"/>
    </location>
</feature>
<feature type="compositionally biased region" description="Low complexity" evidence="7">
    <location>
        <begin position="950"/>
        <end position="964"/>
    </location>
</feature>
<feature type="compositionally biased region" description="Basic and acidic residues" evidence="7">
    <location>
        <begin position="1011"/>
        <end position="1027"/>
    </location>
</feature>
<feature type="compositionally biased region" description="Low complexity" evidence="7">
    <location>
        <begin position="1137"/>
        <end position="1148"/>
    </location>
</feature>
<feature type="compositionally biased region" description="Polar residues" evidence="7">
    <location>
        <begin position="1366"/>
        <end position="1375"/>
    </location>
</feature>
<feature type="compositionally biased region" description="Basic and acidic residues" evidence="7">
    <location>
        <begin position="1403"/>
        <end position="1417"/>
    </location>
</feature>
<feature type="compositionally biased region" description="Polar residues" evidence="7">
    <location>
        <begin position="1459"/>
        <end position="1472"/>
    </location>
</feature>
<feature type="compositionally biased region" description="Basic and acidic residues" evidence="7">
    <location>
        <begin position="1498"/>
        <end position="1515"/>
    </location>
</feature>
<feature type="compositionally biased region" description="Pro residues" evidence="7">
    <location>
        <begin position="1524"/>
        <end position="1536"/>
    </location>
</feature>
<feature type="compositionally biased region" description="Polar residues" evidence="7">
    <location>
        <begin position="1634"/>
        <end position="1649"/>
    </location>
</feature>
<feature type="compositionally biased region" description="Basic and acidic residues" evidence="7">
    <location>
        <begin position="1651"/>
        <end position="1665"/>
    </location>
</feature>
<feature type="modified residue" description="Phosphoserine" evidence="3">
    <location>
        <position position="213"/>
    </location>
</feature>
<feature type="modified residue" description="Phosphoserine" evidence="14">
    <location>
        <position position="439"/>
    </location>
</feature>
<feature type="modified residue" description="Phosphoserine" evidence="14">
    <location>
        <position position="443"/>
    </location>
</feature>
<feature type="modified residue" description="Phosphoserine" evidence="17">
    <location>
        <position position="816"/>
    </location>
</feature>
<feature type="modified residue" description="Phosphoserine" evidence="17">
    <location>
        <position position="890"/>
    </location>
</feature>
<feature type="modified residue" description="Phosphoserine" evidence="13 14 15 16 17">
    <location>
        <position position="910"/>
    </location>
</feature>
<feature type="modified residue" description="Phosphoserine" evidence="13 14 17">
    <location>
        <position position="913"/>
    </location>
</feature>
<feature type="modified residue" description="Phosphoserine" evidence="16">
    <location>
        <position position="970"/>
    </location>
</feature>
<feature type="modified residue" description="Phosphoserine" evidence="3">
    <location>
        <position position="1069"/>
    </location>
</feature>
<feature type="modified residue" description="Phosphoserine" evidence="3">
    <location>
        <position position="1072"/>
    </location>
</feature>
<feature type="modified residue" description="Phosphoserine" evidence="14 17">
    <location>
        <position position="1221"/>
    </location>
</feature>
<feature type="modified residue" description="Phosphoserine" evidence="17 18">
    <location>
        <position position="1441"/>
    </location>
</feature>
<feature type="splice variant" id="VSP_024965" description="In isoform 2." evidence="11">
    <location>
        <begin position="1"/>
        <end position="125"/>
    </location>
</feature>
<feature type="splice variant" id="VSP_024966" description="In isoform 2." evidence="11">
    <original>SPEHLTSGPQHRKAAWSGGVKLRLKHRR</original>
    <variation>MAFYSTPEYDIQLARGLLSGMFLFATRR</variation>
    <location>
        <begin position="126"/>
        <end position="153"/>
    </location>
</feature>
<feature type="splice variant" id="VSP_024967" description="In isoform 2." evidence="11">
    <original>ISGRERSGSMDNTSARGGLLEGMRQADIRYVKTVY</original>
    <variation>KRVKTRDLPGSQSPGRAISRKTTMPTSGGGWREKA</variation>
    <location>
        <begin position="277"/>
        <end position="311"/>
    </location>
</feature>
<feature type="splice variant" id="VSP_024968" description="In isoform 2." evidence="11">
    <location>
        <begin position="312"/>
        <end position="1996"/>
    </location>
</feature>
<feature type="sequence variant" id="VAR_032062" description="In dbSNP:rs3821979.">
    <original>L</original>
    <variation>H</variation>
    <location>
        <position position="147"/>
    </location>
</feature>
<feature type="sequence variant" id="VAR_032063" description="In dbSNP:rs344140." evidence="10">
    <original>G</original>
    <variation>A</variation>
    <location>
        <position position="279"/>
    </location>
</feature>
<feature type="sequence variant" id="VAR_032064" description="In dbSNP:rs344141." evidence="10">
    <original>P</original>
    <variation>A</variation>
    <location>
        <position position="469"/>
    </location>
</feature>
<feature type="sequence variant" id="VAR_032065" description="In dbSNP:rs3733242." evidence="8 10">
    <original>P</original>
    <variation>L</variation>
    <location>
        <position position="1290"/>
    </location>
</feature>
<feature type="sequence conflict" description="In Ref. 1; BAB84689." evidence="12" ref="1">
    <original>R</original>
    <variation>S</variation>
    <location>
        <position position="153"/>
    </location>
</feature>
<organism>
    <name type="scientific">Homo sapiens</name>
    <name type="common">Human</name>
    <dbReference type="NCBI Taxonomy" id="9606"/>
    <lineage>
        <taxon>Eukaryota</taxon>
        <taxon>Metazoa</taxon>
        <taxon>Chordata</taxon>
        <taxon>Craniata</taxon>
        <taxon>Vertebrata</taxon>
        <taxon>Euteleostomi</taxon>
        <taxon>Mammalia</taxon>
        <taxon>Eutheria</taxon>
        <taxon>Euarchontoglires</taxon>
        <taxon>Primates</taxon>
        <taxon>Haplorrhini</taxon>
        <taxon>Catarrhini</taxon>
        <taxon>Hominidae</taxon>
        <taxon>Homo</taxon>
    </lineage>
</organism>
<gene>
    <name type="primary">SHROOM3</name>
    <name type="synonym">KIAA1481</name>
    <name type="synonym">SHRML</name>
    <name type="ORF">MSTP013</name>
</gene>
<reference key="1">
    <citation type="submission" date="2001-02" db="EMBL/GenBank/DDBJ databases">
        <title>Molecular cloning of FKBP12-associated protein.</title>
        <authorList>
            <person name="Koide M."/>
            <person name="Iio A."/>
            <person name="Obata K."/>
            <person name="Inagaki M."/>
            <person name="Yokota M."/>
            <person name="Ono T."/>
            <person name="Tuan R.S."/>
        </authorList>
    </citation>
    <scope>NUCLEOTIDE SEQUENCE [MRNA] (ISOFORM 1)</scope>
    <scope>VARIANTS ALA-279; ALA-469 AND LEU-1290</scope>
</reference>
<reference key="2">
    <citation type="journal article" date="2004" name="Nat. Genet.">
        <title>Complete sequencing and characterization of 21,243 full-length human cDNAs.</title>
        <authorList>
            <person name="Ota T."/>
            <person name="Suzuki Y."/>
            <person name="Nishikawa T."/>
            <person name="Otsuki T."/>
            <person name="Sugiyama T."/>
            <person name="Irie R."/>
            <person name="Wakamatsu A."/>
            <person name="Hayashi K."/>
            <person name="Sato H."/>
            <person name="Nagai K."/>
            <person name="Kimura K."/>
            <person name="Makita H."/>
            <person name="Sekine M."/>
            <person name="Obayashi M."/>
            <person name="Nishi T."/>
            <person name="Shibahara T."/>
            <person name="Tanaka T."/>
            <person name="Ishii S."/>
            <person name="Yamamoto J."/>
            <person name="Saito K."/>
            <person name="Kawai Y."/>
            <person name="Isono Y."/>
            <person name="Nakamura Y."/>
            <person name="Nagahari K."/>
            <person name="Murakami K."/>
            <person name="Yasuda T."/>
            <person name="Iwayanagi T."/>
            <person name="Wagatsuma M."/>
            <person name="Shiratori A."/>
            <person name="Sudo H."/>
            <person name="Hosoiri T."/>
            <person name="Kaku Y."/>
            <person name="Kodaira H."/>
            <person name="Kondo H."/>
            <person name="Sugawara M."/>
            <person name="Takahashi M."/>
            <person name="Kanda K."/>
            <person name="Yokoi T."/>
            <person name="Furuya T."/>
            <person name="Kikkawa E."/>
            <person name="Omura Y."/>
            <person name="Abe K."/>
            <person name="Kamihara K."/>
            <person name="Katsuta N."/>
            <person name="Sato K."/>
            <person name="Tanikawa M."/>
            <person name="Yamazaki M."/>
            <person name="Ninomiya K."/>
            <person name="Ishibashi T."/>
            <person name="Yamashita H."/>
            <person name="Murakawa K."/>
            <person name="Fujimori K."/>
            <person name="Tanai H."/>
            <person name="Kimata M."/>
            <person name="Watanabe M."/>
            <person name="Hiraoka S."/>
            <person name="Chiba Y."/>
            <person name="Ishida S."/>
            <person name="Ono Y."/>
            <person name="Takiguchi S."/>
            <person name="Watanabe S."/>
            <person name="Yosida M."/>
            <person name="Hotuta T."/>
            <person name="Kusano J."/>
            <person name="Kanehori K."/>
            <person name="Takahashi-Fujii A."/>
            <person name="Hara H."/>
            <person name="Tanase T.-O."/>
            <person name="Nomura Y."/>
            <person name="Togiya S."/>
            <person name="Komai F."/>
            <person name="Hara R."/>
            <person name="Takeuchi K."/>
            <person name="Arita M."/>
            <person name="Imose N."/>
            <person name="Musashino K."/>
            <person name="Yuuki H."/>
            <person name="Oshima A."/>
            <person name="Sasaki N."/>
            <person name="Aotsuka S."/>
            <person name="Yoshikawa Y."/>
            <person name="Matsunawa H."/>
            <person name="Ichihara T."/>
            <person name="Shiohata N."/>
            <person name="Sano S."/>
            <person name="Moriya S."/>
            <person name="Momiyama H."/>
            <person name="Satoh N."/>
            <person name="Takami S."/>
            <person name="Terashima Y."/>
            <person name="Suzuki O."/>
            <person name="Nakagawa S."/>
            <person name="Senoh A."/>
            <person name="Mizoguchi H."/>
            <person name="Goto Y."/>
            <person name="Shimizu F."/>
            <person name="Wakebe H."/>
            <person name="Hishigaki H."/>
            <person name="Watanabe T."/>
            <person name="Sugiyama A."/>
            <person name="Takemoto M."/>
            <person name="Kawakami B."/>
            <person name="Yamazaki M."/>
            <person name="Watanabe K."/>
            <person name="Kumagai A."/>
            <person name="Itakura S."/>
            <person name="Fukuzumi Y."/>
            <person name="Fujimori Y."/>
            <person name="Komiyama M."/>
            <person name="Tashiro H."/>
            <person name="Tanigami A."/>
            <person name="Fujiwara T."/>
            <person name="Ono T."/>
            <person name="Yamada K."/>
            <person name="Fujii Y."/>
            <person name="Ozaki K."/>
            <person name="Hirao M."/>
            <person name="Ohmori Y."/>
            <person name="Kawabata A."/>
            <person name="Hikiji T."/>
            <person name="Kobatake N."/>
            <person name="Inagaki H."/>
            <person name="Ikema Y."/>
            <person name="Okamoto S."/>
            <person name="Okitani R."/>
            <person name="Kawakami T."/>
            <person name="Noguchi S."/>
            <person name="Itoh T."/>
            <person name="Shigeta K."/>
            <person name="Senba T."/>
            <person name="Matsumura K."/>
            <person name="Nakajima Y."/>
            <person name="Mizuno T."/>
            <person name="Morinaga M."/>
            <person name="Sasaki M."/>
            <person name="Togashi T."/>
            <person name="Oyama M."/>
            <person name="Hata H."/>
            <person name="Watanabe M."/>
            <person name="Komatsu T."/>
            <person name="Mizushima-Sugano J."/>
            <person name="Satoh T."/>
            <person name="Shirai Y."/>
            <person name="Takahashi Y."/>
            <person name="Nakagawa K."/>
            <person name="Okumura K."/>
            <person name="Nagase T."/>
            <person name="Nomura N."/>
            <person name="Kikuchi H."/>
            <person name="Masuho Y."/>
            <person name="Yamashita R."/>
            <person name="Nakai K."/>
            <person name="Yada T."/>
            <person name="Nakamura Y."/>
            <person name="Ohara O."/>
            <person name="Isogai T."/>
            <person name="Sugano S."/>
        </authorList>
    </citation>
    <scope>NUCLEOTIDE SEQUENCE [LARGE SCALE MRNA] (ISOFORM 2)</scope>
    <source>
        <tissue>Spleen</tissue>
    </source>
</reference>
<reference key="3">
    <citation type="journal article" date="2005" name="Nature">
        <title>Generation and annotation of the DNA sequences of human chromosomes 2 and 4.</title>
        <authorList>
            <person name="Hillier L.W."/>
            <person name="Graves T.A."/>
            <person name="Fulton R.S."/>
            <person name="Fulton L.A."/>
            <person name="Pepin K.H."/>
            <person name="Minx P."/>
            <person name="Wagner-McPherson C."/>
            <person name="Layman D."/>
            <person name="Wylie K."/>
            <person name="Sekhon M."/>
            <person name="Becker M.C."/>
            <person name="Fewell G.A."/>
            <person name="Delehaunty K.D."/>
            <person name="Miner T.L."/>
            <person name="Nash W.E."/>
            <person name="Kremitzki C."/>
            <person name="Oddy L."/>
            <person name="Du H."/>
            <person name="Sun H."/>
            <person name="Bradshaw-Cordum H."/>
            <person name="Ali J."/>
            <person name="Carter J."/>
            <person name="Cordes M."/>
            <person name="Harris A."/>
            <person name="Isak A."/>
            <person name="van Brunt A."/>
            <person name="Nguyen C."/>
            <person name="Du F."/>
            <person name="Courtney L."/>
            <person name="Kalicki J."/>
            <person name="Ozersky P."/>
            <person name="Abbott S."/>
            <person name="Armstrong J."/>
            <person name="Belter E.A."/>
            <person name="Caruso L."/>
            <person name="Cedroni M."/>
            <person name="Cotton M."/>
            <person name="Davidson T."/>
            <person name="Desai A."/>
            <person name="Elliott G."/>
            <person name="Erb T."/>
            <person name="Fronick C."/>
            <person name="Gaige T."/>
            <person name="Haakenson W."/>
            <person name="Haglund K."/>
            <person name="Holmes A."/>
            <person name="Harkins R."/>
            <person name="Kim K."/>
            <person name="Kruchowski S.S."/>
            <person name="Strong C.M."/>
            <person name="Grewal N."/>
            <person name="Goyea E."/>
            <person name="Hou S."/>
            <person name="Levy A."/>
            <person name="Martinka S."/>
            <person name="Mead K."/>
            <person name="McLellan M.D."/>
            <person name="Meyer R."/>
            <person name="Randall-Maher J."/>
            <person name="Tomlinson C."/>
            <person name="Dauphin-Kohlberg S."/>
            <person name="Kozlowicz-Reilly A."/>
            <person name="Shah N."/>
            <person name="Swearengen-Shahid S."/>
            <person name="Snider J."/>
            <person name="Strong J.T."/>
            <person name="Thompson J."/>
            <person name="Yoakum M."/>
            <person name="Leonard S."/>
            <person name="Pearman C."/>
            <person name="Trani L."/>
            <person name="Radionenko M."/>
            <person name="Waligorski J.E."/>
            <person name="Wang C."/>
            <person name="Rock S.M."/>
            <person name="Tin-Wollam A.-M."/>
            <person name="Maupin R."/>
            <person name="Latreille P."/>
            <person name="Wendl M.C."/>
            <person name="Yang S.-P."/>
            <person name="Pohl C."/>
            <person name="Wallis J.W."/>
            <person name="Spieth J."/>
            <person name="Bieri T.A."/>
            <person name="Berkowicz N."/>
            <person name="Nelson J.O."/>
            <person name="Osborne J."/>
            <person name="Ding L."/>
            <person name="Meyer R."/>
            <person name="Sabo A."/>
            <person name="Shotland Y."/>
            <person name="Sinha P."/>
            <person name="Wohldmann P.E."/>
            <person name="Cook L.L."/>
            <person name="Hickenbotham M.T."/>
            <person name="Eldred J."/>
            <person name="Williams D."/>
            <person name="Jones T.A."/>
            <person name="She X."/>
            <person name="Ciccarelli F.D."/>
            <person name="Izaurralde E."/>
            <person name="Taylor J."/>
            <person name="Schmutz J."/>
            <person name="Myers R.M."/>
            <person name="Cox D.R."/>
            <person name="Huang X."/>
            <person name="McPherson J.D."/>
            <person name="Mardis E.R."/>
            <person name="Clifton S.W."/>
            <person name="Warren W.C."/>
            <person name="Chinwalla A.T."/>
            <person name="Eddy S.R."/>
            <person name="Marra M.A."/>
            <person name="Ovcharenko I."/>
            <person name="Furey T.S."/>
            <person name="Miller W."/>
            <person name="Eichler E.E."/>
            <person name="Bork P."/>
            <person name="Suyama M."/>
            <person name="Torrents D."/>
            <person name="Waterston R.H."/>
            <person name="Wilson R.K."/>
        </authorList>
    </citation>
    <scope>NUCLEOTIDE SEQUENCE [LARGE SCALE GENOMIC DNA]</scope>
</reference>
<reference key="4">
    <citation type="journal article" date="2000" name="DNA Res.">
        <title>Prediction of the coding sequences of unidentified human genes. XVII. The complete sequences of 100 new cDNA clones from brain which code for large proteins in vitro.</title>
        <authorList>
            <person name="Nagase T."/>
            <person name="Kikuno R."/>
            <person name="Ishikawa K."/>
            <person name="Hirosawa M."/>
            <person name="Ohara O."/>
        </authorList>
    </citation>
    <scope>NUCLEOTIDE SEQUENCE [LARGE SCALE MRNA] OF 617-1996 (ISOFORM 1)</scope>
    <scope>VARIANT LEU-1290</scope>
</reference>
<reference key="5">
    <citation type="journal article" date="2004" name="Genome Res.">
        <title>The status, quality, and expansion of the NIH full-length cDNA project: the Mammalian Gene Collection (MGC).</title>
        <authorList>
            <consortium name="The MGC Project Team"/>
        </authorList>
    </citation>
    <scope>NUCLEOTIDE SEQUENCE [LARGE SCALE MRNA] OF 1230-1996 (ISOFORM 1)</scope>
    <source>
        <tissue>Colon</tissue>
    </source>
</reference>
<reference key="6">
    <citation type="submission" date="1998-11" db="EMBL/GenBank/DDBJ databases">
        <authorList>
            <person name="Hui R.T."/>
            <person name="Liu Y.Q."/>
            <person name="Liu B."/>
            <person name="Zhao B."/>
            <person name="Meng X.M."/>
            <person name="Sheng H."/>
            <person name="Xu Y.Y."/>
            <person name="Wang X.Y."/>
            <person name="Ye J."/>
            <person name="Song L."/>
            <person name="Gao Y."/>
            <person name="Wei Y.J."/>
            <person name="Zhang C.L."/>
            <person name="Zhang J."/>
            <person name="Chai M.Q."/>
            <person name="Chen J.Z."/>
            <person name="Sun Y.H."/>
            <person name="Zhou X.L."/>
            <person name="Jiang Y.X."/>
            <person name="Zhao X.W."/>
            <person name="Liu S."/>
            <person name="Cao H.Q."/>
            <person name="Zhao Y."/>
            <person name="Liu D.Q."/>
            <person name="Ding J.F."/>
            <person name="Liu L.S."/>
            <person name="Gao R.L."/>
            <person name="Wu Q.Y."/>
            <person name="Qiang B.Q."/>
            <person name="Yuan J.G."/>
            <person name="Liew C.C."/>
            <person name="Zhao M.S."/>
        </authorList>
    </citation>
    <scope>NUCLEOTIDE SEQUENCE [LARGE SCALE MRNA] OF 1799-1996 (ISOFORM 1)</scope>
    <source>
        <tissue>Aorta</tissue>
    </source>
</reference>
<reference key="7">
    <citation type="journal article" date="2006" name="BMC Cell Biol.">
        <title>A new standard nomenclature for proteins related to Apx and Shroom.</title>
        <authorList>
            <person name="Hagens O."/>
            <person name="Ballabio A."/>
            <person name="Kalscheuer V."/>
            <person name="Kraehenbuhl J.-P."/>
            <person name="Schiaffino M.V."/>
            <person name="Smith P."/>
            <person name="Staub O."/>
            <person name="Hildebrand J.D."/>
            <person name="Wallingford J.B."/>
        </authorList>
    </citation>
    <scope>NOMENCLATURE</scope>
</reference>
<reference key="8">
    <citation type="journal article" date="2008" name="J. Proteome Res.">
        <title>Combining protein-based IMAC, peptide-based IMAC, and MudPIT for efficient phosphoproteomic analysis.</title>
        <authorList>
            <person name="Cantin G.T."/>
            <person name="Yi W."/>
            <person name="Lu B."/>
            <person name="Park S.K."/>
            <person name="Xu T."/>
            <person name="Lee J.-D."/>
            <person name="Yates J.R. III"/>
        </authorList>
    </citation>
    <scope>PHOSPHORYLATION [LARGE SCALE ANALYSIS] AT SER-910 AND SER-913</scope>
    <scope>IDENTIFICATION BY MASS SPECTROMETRY [LARGE SCALE ANALYSIS]</scope>
    <source>
        <tissue>Cervix carcinoma</tissue>
    </source>
</reference>
<reference key="9">
    <citation type="journal article" date="2008" name="Proc. Natl. Acad. Sci. U.S.A.">
        <title>A quantitative atlas of mitotic phosphorylation.</title>
        <authorList>
            <person name="Dephoure N."/>
            <person name="Zhou C."/>
            <person name="Villen J."/>
            <person name="Beausoleil S.A."/>
            <person name="Bakalarski C.E."/>
            <person name="Elledge S.J."/>
            <person name="Gygi S.P."/>
        </authorList>
    </citation>
    <scope>PHOSPHORYLATION [LARGE SCALE ANALYSIS] AT SER-439; SER-443; SER-910; SER-913 AND SER-1221</scope>
    <scope>IDENTIFICATION BY MASS SPECTROMETRY [LARGE SCALE ANALYSIS]</scope>
    <source>
        <tissue>Cervix carcinoma</tissue>
    </source>
</reference>
<reference key="10">
    <citation type="journal article" date="2009" name="Anal. Chem.">
        <title>Lys-N and trypsin cover complementary parts of the phosphoproteome in a refined SCX-based approach.</title>
        <authorList>
            <person name="Gauci S."/>
            <person name="Helbig A.O."/>
            <person name="Slijper M."/>
            <person name="Krijgsveld J."/>
            <person name="Heck A.J."/>
            <person name="Mohammed S."/>
        </authorList>
    </citation>
    <scope>IDENTIFICATION BY MASS SPECTROMETRY [LARGE SCALE ANALYSIS]</scope>
</reference>
<reference key="11">
    <citation type="journal article" date="2010" name="Sci. Signal.">
        <title>Quantitative phosphoproteomics reveals widespread full phosphorylation site occupancy during mitosis.</title>
        <authorList>
            <person name="Olsen J.V."/>
            <person name="Vermeulen M."/>
            <person name="Santamaria A."/>
            <person name="Kumar C."/>
            <person name="Miller M.L."/>
            <person name="Jensen L.J."/>
            <person name="Gnad F."/>
            <person name="Cox J."/>
            <person name="Jensen T.S."/>
            <person name="Nigg E.A."/>
            <person name="Brunak S."/>
            <person name="Mann M."/>
        </authorList>
    </citation>
    <scope>PHOSPHORYLATION [LARGE SCALE ANALYSIS] AT SER-910</scope>
    <scope>IDENTIFICATION BY MASS SPECTROMETRY [LARGE SCALE ANALYSIS]</scope>
    <source>
        <tissue>Cervix carcinoma</tissue>
    </source>
</reference>
<reference key="12">
    <citation type="journal article" date="2011" name="Sci. Signal.">
        <title>System-wide temporal characterization of the proteome and phosphoproteome of human embryonic stem cell differentiation.</title>
        <authorList>
            <person name="Rigbolt K.T."/>
            <person name="Prokhorova T.A."/>
            <person name="Akimov V."/>
            <person name="Henningsen J."/>
            <person name="Johansen P.T."/>
            <person name="Kratchmarova I."/>
            <person name="Kassem M."/>
            <person name="Mann M."/>
            <person name="Olsen J.V."/>
            <person name="Blagoev B."/>
        </authorList>
    </citation>
    <scope>PHOSPHORYLATION [LARGE SCALE ANALYSIS] AT SER-910 AND SER-970</scope>
    <scope>IDENTIFICATION BY MASS SPECTROMETRY [LARGE SCALE ANALYSIS]</scope>
</reference>
<reference key="13">
    <citation type="journal article" date="2012" name="Mol. Biol. Cell">
        <title>Structure of Shroom domain 2 reveals a three-segmented coiled-coil required for dimerization, Rock binding, and apical constriction.</title>
        <authorList>
            <person name="Mohan S."/>
            <person name="Rizaldy R."/>
            <person name="Das D."/>
            <person name="Bauer R.J."/>
            <person name="Heroux A."/>
            <person name="Trakselis M.A."/>
            <person name="Hildebrand J.D."/>
            <person name="VanDemark A.P."/>
        </authorList>
    </citation>
    <scope>INTERACTION WITH ROCK1</scope>
</reference>
<reference key="14">
    <citation type="journal article" date="2013" name="J. Proteome Res.">
        <title>Toward a comprehensive characterization of a human cancer cell phosphoproteome.</title>
        <authorList>
            <person name="Zhou H."/>
            <person name="Di Palma S."/>
            <person name="Preisinger C."/>
            <person name="Peng M."/>
            <person name="Polat A.N."/>
            <person name="Heck A.J."/>
            <person name="Mohammed S."/>
        </authorList>
    </citation>
    <scope>PHOSPHORYLATION [LARGE SCALE ANALYSIS] AT SER-816; SER-890; SER-910; SER-913; SER-1221 AND SER-1441</scope>
    <scope>IDENTIFICATION BY MASS SPECTROMETRY [LARGE SCALE ANALYSIS]</scope>
    <source>
        <tissue>Cervix carcinoma</tissue>
    </source>
</reference>
<reference key="15">
    <citation type="journal article" date="2014" name="J. Proteomics">
        <title>An enzyme assisted RP-RPLC approach for in-depth analysis of human liver phosphoproteome.</title>
        <authorList>
            <person name="Bian Y."/>
            <person name="Song C."/>
            <person name="Cheng K."/>
            <person name="Dong M."/>
            <person name="Wang F."/>
            <person name="Huang J."/>
            <person name="Sun D."/>
            <person name="Wang L."/>
            <person name="Ye M."/>
            <person name="Zou H."/>
        </authorList>
    </citation>
    <scope>PHOSPHORYLATION [LARGE SCALE ANALYSIS] AT SER-1441</scope>
    <scope>IDENTIFICATION BY MASS SPECTROMETRY [LARGE SCALE ANALYSIS]</scope>
    <source>
        <tissue>Liver</tissue>
    </source>
</reference>
<reference key="16">
    <citation type="journal article" date="2015" name="Proteomics">
        <title>N-terminome analysis of the human mitochondrial proteome.</title>
        <authorList>
            <person name="Vaca Jacome A.S."/>
            <person name="Rabilloud T."/>
            <person name="Schaeffer-Reiss C."/>
            <person name="Rompais M."/>
            <person name="Ayoub D."/>
            <person name="Lane L."/>
            <person name="Bairoch A."/>
            <person name="Van Dorsselaer A."/>
            <person name="Carapito C."/>
        </authorList>
    </citation>
    <scope>IDENTIFICATION BY MASS SPECTROMETRY [LARGE SCALE ANALYSIS]</scope>
</reference>
<keyword id="KW-0002">3D-structure</keyword>
<keyword id="KW-0009">Actin-binding</keyword>
<keyword id="KW-0025">Alternative splicing</keyword>
<keyword id="KW-0965">Cell junction</keyword>
<keyword id="KW-1003">Cell membrane</keyword>
<keyword id="KW-0133">Cell shape</keyword>
<keyword id="KW-0963">Cytoplasm</keyword>
<keyword id="KW-0206">Cytoskeleton</keyword>
<keyword id="KW-0217">Developmental protein</keyword>
<keyword id="KW-0472">Membrane</keyword>
<keyword id="KW-0493">Microtubule</keyword>
<keyword id="KW-0597">Phosphoprotein</keyword>
<keyword id="KW-1267">Proteomics identification</keyword>
<keyword id="KW-1185">Reference proteome</keyword>
<dbReference type="EMBL" id="AB055660">
    <property type="protein sequence ID" value="BAB84689.1"/>
    <property type="status" value="ALT_INIT"/>
    <property type="molecule type" value="mRNA"/>
</dbReference>
<dbReference type="EMBL" id="AK127929">
    <property type="protein sequence ID" value="BAC87195.1"/>
    <property type="molecule type" value="mRNA"/>
</dbReference>
<dbReference type="EMBL" id="AC096743">
    <property type="status" value="NOT_ANNOTATED_CDS"/>
    <property type="molecule type" value="Genomic_DNA"/>
</dbReference>
<dbReference type="EMBL" id="AC107051">
    <property type="status" value="NOT_ANNOTATED_CDS"/>
    <property type="molecule type" value="Genomic_DNA"/>
</dbReference>
<dbReference type="EMBL" id="AC107072">
    <property type="status" value="NOT_ANNOTATED_CDS"/>
    <property type="molecule type" value="Genomic_DNA"/>
</dbReference>
<dbReference type="EMBL" id="AC112249">
    <property type="status" value="NOT_ANNOTATED_CDS"/>
    <property type="molecule type" value="Genomic_DNA"/>
</dbReference>
<dbReference type="EMBL" id="AC121158">
    <property type="status" value="NOT_ANNOTATED_CDS"/>
    <property type="molecule type" value="Genomic_DNA"/>
</dbReference>
<dbReference type="EMBL" id="AB040914">
    <property type="protein sequence ID" value="BAA96005.1"/>
    <property type="molecule type" value="mRNA"/>
</dbReference>
<dbReference type="EMBL" id="BC007291">
    <property type="protein sequence ID" value="AAH07291.1"/>
    <property type="molecule type" value="mRNA"/>
</dbReference>
<dbReference type="EMBL" id="AF109367">
    <property type="protein sequence ID" value="AAQ13515.1"/>
    <property type="status" value="ALT_INIT"/>
    <property type="molecule type" value="mRNA"/>
</dbReference>
<dbReference type="CCDS" id="CCDS3579.2">
    <molecule id="Q8TF72-1"/>
</dbReference>
<dbReference type="RefSeq" id="NP_065910.3">
    <molecule id="Q8TF72-1"/>
    <property type="nucleotide sequence ID" value="NM_020859.4"/>
</dbReference>
<dbReference type="PDB" id="6FBB">
    <property type="method" value="X-ray"/>
    <property type="resolution" value="1.30 A"/>
    <property type="chains" value="P=1240-1244"/>
</dbReference>
<dbReference type="PDB" id="6FCP">
    <property type="method" value="X-ray"/>
    <property type="resolution" value="1.45 A"/>
    <property type="chains" value="P=1233-1247"/>
</dbReference>
<dbReference type="PDBsum" id="6FBB"/>
<dbReference type="PDBsum" id="6FCP"/>
<dbReference type="SMR" id="Q8TF72"/>
<dbReference type="BioGRID" id="121665">
    <property type="interactions" value="77"/>
</dbReference>
<dbReference type="FunCoup" id="Q8TF72">
    <property type="interactions" value="355"/>
</dbReference>
<dbReference type="IntAct" id="Q8TF72">
    <property type="interactions" value="36"/>
</dbReference>
<dbReference type="MINT" id="Q8TF72"/>
<dbReference type="STRING" id="9606.ENSP00000296043"/>
<dbReference type="GlyGen" id="Q8TF72">
    <property type="glycosylation" value="3 sites, 1 O-linked glycan (1 site)"/>
</dbReference>
<dbReference type="iPTMnet" id="Q8TF72"/>
<dbReference type="PhosphoSitePlus" id="Q8TF72"/>
<dbReference type="SwissPalm" id="Q8TF72"/>
<dbReference type="BioMuta" id="SHROOM3"/>
<dbReference type="DMDM" id="300669666"/>
<dbReference type="jPOST" id="Q8TF72"/>
<dbReference type="MassIVE" id="Q8TF72"/>
<dbReference type="PaxDb" id="9606-ENSP00000296043"/>
<dbReference type="PeptideAtlas" id="Q8TF72"/>
<dbReference type="ProteomicsDB" id="74572">
    <molecule id="Q8TF72-1"/>
</dbReference>
<dbReference type="ProteomicsDB" id="74573">
    <molecule id="Q8TF72-2"/>
</dbReference>
<dbReference type="Pumba" id="Q8TF72"/>
<dbReference type="Antibodypedia" id="62376">
    <property type="antibodies" value="52 antibodies from 19 providers"/>
</dbReference>
<dbReference type="DNASU" id="57619"/>
<dbReference type="Ensembl" id="ENST00000296043.7">
    <molecule id="Q8TF72-1"/>
    <property type="protein sequence ID" value="ENSP00000296043.6"/>
    <property type="gene ID" value="ENSG00000138771.16"/>
</dbReference>
<dbReference type="GeneID" id="57619"/>
<dbReference type="KEGG" id="hsa:57619"/>
<dbReference type="MANE-Select" id="ENST00000296043.7">
    <property type="protein sequence ID" value="ENSP00000296043.6"/>
    <property type="RefSeq nucleotide sequence ID" value="NM_020859.4"/>
    <property type="RefSeq protein sequence ID" value="NP_065910.3"/>
</dbReference>
<dbReference type="UCSC" id="uc011cbx.3">
    <molecule id="Q8TF72-1"/>
    <property type="organism name" value="human"/>
</dbReference>
<dbReference type="AGR" id="HGNC:30422"/>
<dbReference type="CTD" id="57619"/>
<dbReference type="DisGeNET" id="57619"/>
<dbReference type="GeneCards" id="SHROOM3"/>
<dbReference type="HGNC" id="HGNC:30422">
    <property type="gene designation" value="SHROOM3"/>
</dbReference>
<dbReference type="HPA" id="ENSG00000138771">
    <property type="expression patterns" value="Low tissue specificity"/>
</dbReference>
<dbReference type="MalaCards" id="SHROOM3"/>
<dbReference type="MIM" id="604570">
    <property type="type" value="gene"/>
</dbReference>
<dbReference type="neXtProt" id="NX_Q8TF72"/>
<dbReference type="OpenTargets" id="ENSG00000138771"/>
<dbReference type="PharmGKB" id="PA147357295"/>
<dbReference type="VEuPathDB" id="HostDB:ENSG00000138771"/>
<dbReference type="eggNOG" id="ENOG502QUU2">
    <property type="taxonomic scope" value="Eukaryota"/>
</dbReference>
<dbReference type="GeneTree" id="ENSGT00940000157778"/>
<dbReference type="HOGENOM" id="CLU_002434_1_0_1"/>
<dbReference type="InParanoid" id="Q8TF72"/>
<dbReference type="OMA" id="PFCKERS"/>
<dbReference type="OrthoDB" id="10063560at2759"/>
<dbReference type="PAN-GO" id="Q8TF72">
    <property type="GO annotations" value="6 GO annotations based on evolutionary models"/>
</dbReference>
<dbReference type="PhylomeDB" id="Q8TF72"/>
<dbReference type="TreeFam" id="TF333370"/>
<dbReference type="PathwayCommons" id="Q8TF72"/>
<dbReference type="SignaLink" id="Q8TF72"/>
<dbReference type="BioGRID-ORCS" id="57619">
    <property type="hits" value="9 hits in 1156 CRISPR screens"/>
</dbReference>
<dbReference type="ChiTaRS" id="SHROOM3">
    <property type="organism name" value="human"/>
</dbReference>
<dbReference type="GeneWiki" id="SHROOM3"/>
<dbReference type="GenomeRNAi" id="57619"/>
<dbReference type="Pharos" id="Q8TF72">
    <property type="development level" value="Tbio"/>
</dbReference>
<dbReference type="PRO" id="PR:Q8TF72"/>
<dbReference type="Proteomes" id="UP000005640">
    <property type="component" value="Chromosome 4"/>
</dbReference>
<dbReference type="RNAct" id="Q8TF72">
    <property type="molecule type" value="protein"/>
</dbReference>
<dbReference type="Bgee" id="ENSG00000138771">
    <property type="expression patterns" value="Expressed in ileal mucosa and 175 other cell types or tissues"/>
</dbReference>
<dbReference type="ExpressionAtlas" id="Q8TF72">
    <property type="expression patterns" value="baseline and differential"/>
</dbReference>
<dbReference type="GO" id="GO:0005912">
    <property type="term" value="C:adherens junction"/>
    <property type="evidence" value="ECO:0000250"/>
    <property type="project" value="HGNC-UCL"/>
</dbReference>
<dbReference type="GO" id="GO:0043296">
    <property type="term" value="C:apical junction complex"/>
    <property type="evidence" value="ECO:0000250"/>
    <property type="project" value="UniProtKB"/>
</dbReference>
<dbReference type="GO" id="GO:0016324">
    <property type="term" value="C:apical plasma membrane"/>
    <property type="evidence" value="ECO:0000250"/>
    <property type="project" value="HGNC-UCL"/>
</dbReference>
<dbReference type="GO" id="GO:0030864">
    <property type="term" value="C:cortical actin cytoskeleton"/>
    <property type="evidence" value="ECO:0000318"/>
    <property type="project" value="GO_Central"/>
</dbReference>
<dbReference type="GO" id="GO:0005856">
    <property type="term" value="C:cytoskeleton"/>
    <property type="evidence" value="ECO:0000250"/>
    <property type="project" value="HGNC-UCL"/>
</dbReference>
<dbReference type="GO" id="GO:0005874">
    <property type="term" value="C:microtubule"/>
    <property type="evidence" value="ECO:0007669"/>
    <property type="project" value="UniProtKB-KW"/>
</dbReference>
<dbReference type="GO" id="GO:0051015">
    <property type="term" value="F:actin filament binding"/>
    <property type="evidence" value="ECO:0000318"/>
    <property type="project" value="GO_Central"/>
</dbReference>
<dbReference type="GO" id="GO:0007015">
    <property type="term" value="P:actin filament organization"/>
    <property type="evidence" value="ECO:0000318"/>
    <property type="project" value="GO_Central"/>
</dbReference>
<dbReference type="GO" id="GO:0045176">
    <property type="term" value="P:apical protein localization"/>
    <property type="evidence" value="ECO:0000250"/>
    <property type="project" value="HGNC-UCL"/>
</dbReference>
<dbReference type="GO" id="GO:0000902">
    <property type="term" value="P:cell morphogenesis"/>
    <property type="evidence" value="ECO:0000250"/>
    <property type="project" value="HGNC-UCL"/>
</dbReference>
<dbReference type="GO" id="GO:0043482">
    <property type="term" value="P:cellular pigment accumulation"/>
    <property type="evidence" value="ECO:0000250"/>
    <property type="project" value="HGNC-UCL"/>
</dbReference>
<dbReference type="GO" id="GO:0007389">
    <property type="term" value="P:pattern specification process"/>
    <property type="evidence" value="ECO:0000250"/>
    <property type="project" value="HGNC-UCL"/>
</dbReference>
<dbReference type="GO" id="GO:0008360">
    <property type="term" value="P:regulation of cell shape"/>
    <property type="evidence" value="ECO:0007669"/>
    <property type="project" value="UniProtKB-KW"/>
</dbReference>
<dbReference type="CDD" id="cd06750">
    <property type="entry name" value="PDZ_shroom2_3_4-like"/>
    <property type="match status" value="1"/>
</dbReference>
<dbReference type="FunFam" id="2.30.42.10:FF:000100">
    <property type="entry name" value="Shroom family member 2"/>
    <property type="match status" value="1"/>
</dbReference>
<dbReference type="Gene3D" id="2.30.42.10">
    <property type="match status" value="1"/>
</dbReference>
<dbReference type="Gene3D" id="6.10.250.3120">
    <property type="match status" value="1"/>
</dbReference>
<dbReference type="InterPro" id="IPR014800">
    <property type="entry name" value="ASD1_dom"/>
</dbReference>
<dbReference type="InterPro" id="IPR014799">
    <property type="entry name" value="ASD2_dom"/>
</dbReference>
<dbReference type="InterPro" id="IPR001478">
    <property type="entry name" value="PDZ"/>
</dbReference>
<dbReference type="InterPro" id="IPR036034">
    <property type="entry name" value="PDZ_sf"/>
</dbReference>
<dbReference type="InterPro" id="IPR027685">
    <property type="entry name" value="Shroom_fam"/>
</dbReference>
<dbReference type="PANTHER" id="PTHR15012">
    <property type="entry name" value="APICAL PROTEIN/SHROOM-RELATED"/>
    <property type="match status" value="1"/>
</dbReference>
<dbReference type="PANTHER" id="PTHR15012:SF33">
    <property type="entry name" value="PROTEIN SHROOM3"/>
    <property type="match status" value="1"/>
</dbReference>
<dbReference type="Pfam" id="PF08688">
    <property type="entry name" value="ASD1"/>
    <property type="match status" value="1"/>
</dbReference>
<dbReference type="Pfam" id="PF08687">
    <property type="entry name" value="ASD2"/>
    <property type="match status" value="1"/>
</dbReference>
<dbReference type="Pfam" id="PF00595">
    <property type="entry name" value="PDZ"/>
    <property type="match status" value="1"/>
</dbReference>
<dbReference type="SMART" id="SM00228">
    <property type="entry name" value="PDZ"/>
    <property type="match status" value="1"/>
</dbReference>
<dbReference type="SUPFAM" id="SSF50156">
    <property type="entry name" value="PDZ domain-like"/>
    <property type="match status" value="1"/>
</dbReference>
<dbReference type="PROSITE" id="PS51306">
    <property type="entry name" value="ASD1"/>
    <property type="match status" value="1"/>
</dbReference>
<dbReference type="PROSITE" id="PS51307">
    <property type="entry name" value="ASD2"/>
    <property type="match status" value="1"/>
</dbReference>
<dbReference type="PROSITE" id="PS50106">
    <property type="entry name" value="PDZ"/>
    <property type="match status" value="1"/>
</dbReference>
<sequence>MMRTTEDFHKPSATLNSNTATKGRYIYLEAFLEGGAPWGFTLKGGLEHGEPLIISKVEEGGKADTLSSKLQAGDEVVHINEVTLSSSRKEAVSLVKGSYKTLRLVVRRDVCTDPGHADTGASNFVSPEHLTSGPQHRKAAWSGGVKLRLKHRRSEPAGRPHSWHTTKSGEKQPDASMMQISQGMIGPPWHQSYHSSSSTSDLSNYDHAYLRRSPDQCSSQGSMESLEPSGAYPPCHLSPAKSTGSIDQLSHFHNKRDSAYSSFSTSSSILEYPHPGISGRERSGSMDNTSARGGLLEGMRQADIRYVKTVYDTRRGVSAEYEVNSSALLLQGREARASANGQGYDKWSNIPRGKGVPPPSWSQQCPSSLETATDNLPPKVGAPLPPARSDSYAAFRHRERPSSWSSLDQKRLCRPQANSLGSLKSPFIEEQLHTVLEKSPENSPPVKPKHNYTQKAQPGQPLLPTSIYPVPSLEPHFAQVPQPSVSSNGMLYPALAKESGYIAPQGACNKMATIDENGNQNGSGRPGFAFCQPLEHDLLSPVEKKPEATAKYVPSKVHFCSVPENEEDASLKRHLTPPQGNSPHSNERKSTHSNKPSSHPHSLKCPQAQAWQAGEDKRSSRLSEPWEGDFQEDHNANLWRRLEREGLGQSLSGNFGKTKSAFSSLQNIPESLRRHSSLELGRGTQEGYPGGRPTCAVNTKAEDPGRKAAPDLGSHLDRQVSYPRPEGRTGASASFNSTDPSPEEPPAPSHPHTSSLGRRGPGPGSASALQGFQYGKPHCSVLEKVSKFEQREQGSQRPSVGGSGFGHNYRPHRTVSTSSTSGNDFEETKAHIRFSESAEPLGNGEQHFKNGELKLEEASRQPCGQQLSGGASDSGRGPQRPDARLLRSQSTFQLSSEPEREPEWRDRPGSPESPLLDAPFSRAYRNSIKDAQSRVLGATSFRRRDLELGAPVASRSWRPRPSSAHVGLRSPEASASASPHTPRERHSVTPAEGDLARPVPPAARRGARRRLTPEQKKRSYSEPEKMNEVGIVEEAEPAPLGPQRNGMRFPESSVADRRRLFERDGKACSTLSLSGPELKQFQQSALADYIQRKTGKRPTSAAGCSLQEPGPLRERAQSAYLQPGPAALEGSGLASASSLSSLREPSLQPRREATLLPATVAETQQAPRDRSSSFAGGRRLGERRRGDLLSGANGGTRGTQRGDETPREPSSWGARAGKSMSAEDLLERSDVLAGPVHVRSRSSPATADKRQDVLLGQDSGFGLVKDPCYLAGPGSRSLSCSERGQEEMLPLFHHLTPRWGGSGCKAIGDSSVPSECPGTLDHQRQASRTPCPRPPLAGTQGLVTDTRAAPLTPIGTPLPSAIPSGYCSQDGQTGRQPLPPYTPAMMHRSNGHTLTQPPGPRGCEGDGPEHGVEEGTRKRVSLPQWPPPSRAKWAHAAREDSLPEESSAPDFANLKHYQKQQSLPSLCSTSDPDTPLGAPSTPGRISLRISESVLRDSPPPHEDYEDEVFVRDPHPKATSSPTFEPLPPPPPPPPSQETPVYSMDDFPPPPPHTVCEAQLDSEDPEGPRPSFNKLSKVTIARERHMPGAAHVVGSQTLASRLQTSIKGSEAESTPPSFMSVHAQLAGSLGGQPAPIQTQSLSHDPVSGTQGLEKKVSPDPQKSSEDIRTEALAKEIVHQDKSLADILDPDSRLKTTMDLMEGLFPRDVNLLKENSVKRKAIQRTVSSSGCEGKRNEDKEAVSMLVNCPAYYSVSAPKAELLNKIKEMPAEVNEEEEQADVNEKKAELIGSLTHKLETLQEAKGSLLTDIKLNNALGEEVEALISELCKPNEFDKYRMFIGDLDKVVNLLLSLSGRLARVENVLSGLGEDASNEERSSLYEKRKILAGQHEDARELKENLDRRERVVLGILANYLSEEQLQDYQHFVKMKSTLLIEQRKLDDKIKLGQEQVKCLLESLPSDFIPKAGALALPPNLTSEPIPAGGCTFSGIFPTLTSPL</sequence>
<evidence type="ECO:0000250" key="1"/>
<evidence type="ECO:0000250" key="2">
    <source>
        <dbReference type="UniProtKB" id="Q27IV2"/>
    </source>
</evidence>
<evidence type="ECO:0000250" key="3">
    <source>
        <dbReference type="UniProtKB" id="Q9QXN0"/>
    </source>
</evidence>
<evidence type="ECO:0000255" key="4">
    <source>
        <dbReference type="PROSITE-ProRule" id="PRU00143"/>
    </source>
</evidence>
<evidence type="ECO:0000255" key="5">
    <source>
        <dbReference type="PROSITE-ProRule" id="PRU00637"/>
    </source>
</evidence>
<evidence type="ECO:0000255" key="6">
    <source>
        <dbReference type="PROSITE-ProRule" id="PRU00638"/>
    </source>
</evidence>
<evidence type="ECO:0000256" key="7">
    <source>
        <dbReference type="SAM" id="MobiDB-lite"/>
    </source>
</evidence>
<evidence type="ECO:0000269" key="8">
    <source>
    </source>
</evidence>
<evidence type="ECO:0000269" key="9">
    <source>
    </source>
</evidence>
<evidence type="ECO:0000269" key="10">
    <source ref="1"/>
</evidence>
<evidence type="ECO:0000303" key="11">
    <source>
    </source>
</evidence>
<evidence type="ECO:0000305" key="12"/>
<evidence type="ECO:0007744" key="13">
    <source>
    </source>
</evidence>
<evidence type="ECO:0007744" key="14">
    <source>
    </source>
</evidence>
<evidence type="ECO:0007744" key="15">
    <source>
    </source>
</evidence>
<evidence type="ECO:0007744" key="16">
    <source>
    </source>
</evidence>
<evidence type="ECO:0007744" key="17">
    <source>
    </source>
</evidence>
<evidence type="ECO:0007744" key="18">
    <source>
    </source>
</evidence>
<comment type="function">
    <text evidence="2 3">Controls cell shape changes in the neuroepithelium during neural tube closure. Induces apical constriction in epithelial cells by promoting the apical accumulation of F-actin and myosin II, and probably by bundling stress fibers (By similarity). Induces apicobasal cell elongation by redistributing gamma-tubulin and directing the assembly of robust apicobasal microtubule arrays (By similarity).</text>
</comment>
<comment type="subunit">
    <text evidence="3 9">Interacts with F-actin (By similarity). Interacts with ROCK1 (PubMed:22493320).</text>
</comment>
<comment type="subcellular location">
    <subcellularLocation>
        <location evidence="3">Cell junction</location>
        <location evidence="3">Adherens junction</location>
    </subcellularLocation>
    <subcellularLocation>
        <location evidence="3">Cytoplasm</location>
        <location evidence="3">Cytoskeleton</location>
    </subcellularLocation>
    <subcellularLocation>
        <location evidence="3">Apical cell membrane</location>
        <topology evidence="3">Peripheral membrane protein</topology>
    </subcellularLocation>
    <text evidence="3">Colocalizes with F-actin in stress fibers and adherens junctions.</text>
</comment>
<comment type="alternative products">
    <event type="alternative splicing"/>
    <isoform>
        <id>Q8TF72-1</id>
        <name>1</name>
        <sequence type="displayed"/>
    </isoform>
    <isoform>
        <id>Q8TF72-2</id>
        <name>2</name>
        <sequence type="described" ref="VSP_024965 VSP_024966 VSP_024967 VSP_024968"/>
    </isoform>
</comment>
<comment type="domain">
    <text evidence="1">The ASD1 domain mediates F-actin binding.</text>
</comment>
<comment type="domain">
    <text evidence="3">The ASD2 domain mediates the interaction with ROCK1 and is required for apical constriction induction.</text>
</comment>
<comment type="similarity">
    <text evidence="12">Belongs to the shroom family.</text>
</comment>
<comment type="caution">
    <text evidence="12">It is uncertain whether Met-1 or Met-2 is the initiator. Met-2 is more conserved than Met-1 among the orthologs.</text>
</comment>
<comment type="sequence caution" evidence="12">
    <conflict type="erroneous initiation">
        <sequence resource="EMBL-CDS" id="AAQ13515"/>
    </conflict>
    <text>Truncated N-terminus.</text>
</comment>
<comment type="sequence caution" evidence="12">
    <conflict type="erroneous initiation">
        <sequence resource="EMBL-CDS" id="BAB84689"/>
    </conflict>
    <text>Truncated N-terminus.</text>
</comment>
<name>SHRM3_HUMAN</name>
<accession>Q8TF72</accession>
<accession>Q5QTQ3</accession>
<accession>Q6ZRW3</accession>
<accession>Q96IR9</accession>
<accession>Q9P247</accession>
<proteinExistence type="evidence at protein level"/>